<name>TTCA_SHEPC</name>
<feature type="chain" id="PRO_0000348841" description="tRNA-cytidine(32) 2-sulfurtransferase">
    <location>
        <begin position="1"/>
        <end position="310"/>
    </location>
</feature>
<feature type="short sequence motif" description="PP-loop motif" evidence="1">
    <location>
        <begin position="45"/>
        <end position="50"/>
    </location>
</feature>
<feature type="binding site" evidence="1">
    <location>
        <position position="120"/>
    </location>
    <ligand>
        <name>[4Fe-4S] cluster</name>
        <dbReference type="ChEBI" id="CHEBI:49883"/>
    </ligand>
</feature>
<feature type="binding site" evidence="1">
    <location>
        <position position="123"/>
    </location>
    <ligand>
        <name>[4Fe-4S] cluster</name>
        <dbReference type="ChEBI" id="CHEBI:49883"/>
    </ligand>
</feature>
<feature type="binding site" evidence="1">
    <location>
        <position position="211"/>
    </location>
    <ligand>
        <name>[4Fe-4S] cluster</name>
        <dbReference type="ChEBI" id="CHEBI:49883"/>
    </ligand>
</feature>
<gene>
    <name evidence="1" type="primary">ttcA</name>
    <name type="ordered locus">Sputcn32_1949</name>
</gene>
<accession>A4Y6T9</accession>
<proteinExistence type="inferred from homology"/>
<organism>
    <name type="scientific">Shewanella putrefaciens (strain CN-32 / ATCC BAA-453)</name>
    <dbReference type="NCBI Taxonomy" id="319224"/>
    <lineage>
        <taxon>Bacteria</taxon>
        <taxon>Pseudomonadati</taxon>
        <taxon>Pseudomonadota</taxon>
        <taxon>Gammaproteobacteria</taxon>
        <taxon>Alteromonadales</taxon>
        <taxon>Shewanellaceae</taxon>
        <taxon>Shewanella</taxon>
    </lineage>
</organism>
<evidence type="ECO:0000255" key="1">
    <source>
        <dbReference type="HAMAP-Rule" id="MF_01850"/>
    </source>
</evidence>
<reference key="1">
    <citation type="submission" date="2007-04" db="EMBL/GenBank/DDBJ databases">
        <title>Complete sequence of Shewanella putrefaciens CN-32.</title>
        <authorList>
            <consortium name="US DOE Joint Genome Institute"/>
            <person name="Copeland A."/>
            <person name="Lucas S."/>
            <person name="Lapidus A."/>
            <person name="Barry K."/>
            <person name="Detter J.C."/>
            <person name="Glavina del Rio T."/>
            <person name="Hammon N."/>
            <person name="Israni S."/>
            <person name="Dalin E."/>
            <person name="Tice H."/>
            <person name="Pitluck S."/>
            <person name="Chain P."/>
            <person name="Malfatti S."/>
            <person name="Shin M."/>
            <person name="Vergez L."/>
            <person name="Schmutz J."/>
            <person name="Larimer F."/>
            <person name="Land M."/>
            <person name="Hauser L."/>
            <person name="Kyrpides N."/>
            <person name="Mikhailova N."/>
            <person name="Romine M.F."/>
            <person name="Fredrickson J."/>
            <person name="Tiedje J."/>
            <person name="Richardson P."/>
        </authorList>
    </citation>
    <scope>NUCLEOTIDE SEQUENCE [LARGE SCALE GENOMIC DNA]</scope>
    <source>
        <strain>CN-32 / ATCC BAA-453</strain>
    </source>
</reference>
<dbReference type="EC" id="2.8.1.-" evidence="1"/>
<dbReference type="EMBL" id="CP000681">
    <property type="protein sequence ID" value="ABP75672.1"/>
    <property type="molecule type" value="Genomic_DNA"/>
</dbReference>
<dbReference type="SMR" id="A4Y6T9"/>
<dbReference type="STRING" id="319224.Sputcn32_1949"/>
<dbReference type="KEGG" id="spc:Sputcn32_1949"/>
<dbReference type="eggNOG" id="COG0037">
    <property type="taxonomic scope" value="Bacteria"/>
</dbReference>
<dbReference type="HOGENOM" id="CLU_026481_0_0_6"/>
<dbReference type="GO" id="GO:0005737">
    <property type="term" value="C:cytoplasm"/>
    <property type="evidence" value="ECO:0007669"/>
    <property type="project" value="UniProtKB-SubCell"/>
</dbReference>
<dbReference type="GO" id="GO:0051539">
    <property type="term" value="F:4 iron, 4 sulfur cluster binding"/>
    <property type="evidence" value="ECO:0007669"/>
    <property type="project" value="UniProtKB-UniRule"/>
</dbReference>
<dbReference type="GO" id="GO:0005524">
    <property type="term" value="F:ATP binding"/>
    <property type="evidence" value="ECO:0007669"/>
    <property type="project" value="UniProtKB-UniRule"/>
</dbReference>
<dbReference type="GO" id="GO:0000287">
    <property type="term" value="F:magnesium ion binding"/>
    <property type="evidence" value="ECO:0007669"/>
    <property type="project" value="UniProtKB-UniRule"/>
</dbReference>
<dbReference type="GO" id="GO:0016783">
    <property type="term" value="F:sulfurtransferase activity"/>
    <property type="evidence" value="ECO:0007669"/>
    <property type="project" value="UniProtKB-UniRule"/>
</dbReference>
<dbReference type="GO" id="GO:0000049">
    <property type="term" value="F:tRNA binding"/>
    <property type="evidence" value="ECO:0007669"/>
    <property type="project" value="UniProtKB-KW"/>
</dbReference>
<dbReference type="GO" id="GO:0034227">
    <property type="term" value="P:tRNA thio-modification"/>
    <property type="evidence" value="ECO:0007669"/>
    <property type="project" value="UniProtKB-UniRule"/>
</dbReference>
<dbReference type="CDD" id="cd24138">
    <property type="entry name" value="TtcA-like"/>
    <property type="match status" value="1"/>
</dbReference>
<dbReference type="Gene3D" id="3.40.50.620">
    <property type="entry name" value="HUPs"/>
    <property type="match status" value="1"/>
</dbReference>
<dbReference type="HAMAP" id="MF_01850">
    <property type="entry name" value="TtcA"/>
    <property type="match status" value="1"/>
</dbReference>
<dbReference type="InterPro" id="IPR014729">
    <property type="entry name" value="Rossmann-like_a/b/a_fold"/>
</dbReference>
<dbReference type="InterPro" id="IPR011063">
    <property type="entry name" value="TilS/TtcA_N"/>
</dbReference>
<dbReference type="InterPro" id="IPR012089">
    <property type="entry name" value="tRNA_Cyd_32_2_STrfase"/>
</dbReference>
<dbReference type="InterPro" id="IPR035107">
    <property type="entry name" value="tRNA_thiolation_TtcA_Ctu1"/>
</dbReference>
<dbReference type="NCBIfam" id="NF007972">
    <property type="entry name" value="PRK10696.1"/>
    <property type="match status" value="1"/>
</dbReference>
<dbReference type="PANTHER" id="PTHR43686:SF1">
    <property type="entry name" value="AMINOTRAN_5 DOMAIN-CONTAINING PROTEIN"/>
    <property type="match status" value="1"/>
</dbReference>
<dbReference type="PANTHER" id="PTHR43686">
    <property type="entry name" value="SULFURTRANSFERASE-RELATED"/>
    <property type="match status" value="1"/>
</dbReference>
<dbReference type="Pfam" id="PF01171">
    <property type="entry name" value="ATP_bind_3"/>
    <property type="match status" value="1"/>
</dbReference>
<dbReference type="PIRSF" id="PIRSF004976">
    <property type="entry name" value="ATPase_YdaO"/>
    <property type="match status" value="1"/>
</dbReference>
<dbReference type="SUPFAM" id="SSF52402">
    <property type="entry name" value="Adenine nucleotide alpha hydrolases-like"/>
    <property type="match status" value="1"/>
</dbReference>
<keyword id="KW-0004">4Fe-4S</keyword>
<keyword id="KW-0067">ATP-binding</keyword>
<keyword id="KW-0963">Cytoplasm</keyword>
<keyword id="KW-0408">Iron</keyword>
<keyword id="KW-0411">Iron-sulfur</keyword>
<keyword id="KW-0460">Magnesium</keyword>
<keyword id="KW-0479">Metal-binding</keyword>
<keyword id="KW-0547">Nucleotide-binding</keyword>
<keyword id="KW-0694">RNA-binding</keyword>
<keyword id="KW-0808">Transferase</keyword>
<keyword id="KW-0819">tRNA processing</keyword>
<keyword id="KW-0820">tRNA-binding</keyword>
<comment type="function">
    <text evidence="1">Catalyzes the ATP-dependent 2-thiolation of cytidine in position 32 of tRNA, to form 2-thiocytidine (s(2)C32). The sulfur atoms are provided by the cysteine/cysteine desulfurase (IscS) system.</text>
</comment>
<comment type="catalytic activity">
    <reaction evidence="1">
        <text>cytidine(32) in tRNA + S-sulfanyl-L-cysteinyl-[cysteine desulfurase] + AH2 + ATP = 2-thiocytidine(32) in tRNA + L-cysteinyl-[cysteine desulfurase] + A + AMP + diphosphate + H(+)</text>
        <dbReference type="Rhea" id="RHEA:57048"/>
        <dbReference type="Rhea" id="RHEA-COMP:10288"/>
        <dbReference type="Rhea" id="RHEA-COMP:12157"/>
        <dbReference type="Rhea" id="RHEA-COMP:12158"/>
        <dbReference type="Rhea" id="RHEA-COMP:14821"/>
        <dbReference type="ChEBI" id="CHEBI:13193"/>
        <dbReference type="ChEBI" id="CHEBI:15378"/>
        <dbReference type="ChEBI" id="CHEBI:17499"/>
        <dbReference type="ChEBI" id="CHEBI:29950"/>
        <dbReference type="ChEBI" id="CHEBI:30616"/>
        <dbReference type="ChEBI" id="CHEBI:33019"/>
        <dbReference type="ChEBI" id="CHEBI:61963"/>
        <dbReference type="ChEBI" id="CHEBI:82748"/>
        <dbReference type="ChEBI" id="CHEBI:141453"/>
        <dbReference type="ChEBI" id="CHEBI:456215"/>
    </reaction>
    <physiologicalReaction direction="left-to-right" evidence="1">
        <dbReference type="Rhea" id="RHEA:57049"/>
    </physiologicalReaction>
</comment>
<comment type="cofactor">
    <cofactor evidence="1">
        <name>Mg(2+)</name>
        <dbReference type="ChEBI" id="CHEBI:18420"/>
    </cofactor>
</comment>
<comment type="cofactor">
    <cofactor evidence="1">
        <name>[4Fe-4S] cluster</name>
        <dbReference type="ChEBI" id="CHEBI:49883"/>
    </cofactor>
    <text evidence="1">Binds 1 [4Fe-4S] cluster per subunit. The cluster is chelated by three Cys residues, the fourth Fe has a free coordination site that may bind a sulfur atom transferred from the persulfide of IscS.</text>
</comment>
<comment type="pathway">
    <text evidence="1">tRNA modification.</text>
</comment>
<comment type="subunit">
    <text evidence="1">Homodimer.</text>
</comment>
<comment type="subcellular location">
    <subcellularLocation>
        <location evidence="1">Cytoplasm</location>
    </subcellularLocation>
</comment>
<comment type="miscellaneous">
    <text evidence="1">The thiolation reaction likely consists of two steps: a first activation step by ATP to form an adenylated intermediate of the target base of tRNA, and a second nucleophilic substitution step of the sulfur (S) atom supplied by the hydrosulfide attached to the Fe-S cluster.</text>
</comment>
<comment type="similarity">
    <text evidence="1">Belongs to the TtcA family.</text>
</comment>
<sequence>MSEELSKKHTTRLNKLQKRLRREVGSAIADYNMIEDGDRVMCCLSGGKDSYAMLDILMNLQQRAPIQFEIIAVNLDQKQPGFPEDILPAYLDKLKVPYHILEKDTYSIVKDKIPEGKTTCSLCSRLRRGTLYGFAQRIGATKIALGHHRDDIIETLFLNMFFGGKMKAMPPKLLSDDGANIVIRPLAYCREKDLEEYAQLKQFPIIPCNLCGSQENLKRAAVKDMLNQWDRQYPGRIETIFTAMQNTAPSQGVDREQFDFISLKRDPDVPMTGDVAEADLPAFDFLDIANSGHIDLDAAQRIDVVSFYEA</sequence>
<protein>
    <recommendedName>
        <fullName evidence="1">tRNA-cytidine(32) 2-sulfurtransferase</fullName>
        <ecNumber evidence="1">2.8.1.-</ecNumber>
    </recommendedName>
    <alternativeName>
        <fullName evidence="1">Two-thiocytidine biosynthesis protein A</fullName>
    </alternativeName>
    <alternativeName>
        <fullName evidence="1">tRNA 2-thiocytidine biosynthesis protein TtcA</fullName>
    </alternativeName>
</protein>